<comment type="function">
    <text evidence="1">Catalyzes the oxidation of 3-carboxy-2-hydroxy-4-methylpentanoate (3-isopropylmalate) to 3-carboxy-4-methyl-2-oxopentanoate. The product decarboxylates to 4-methyl-2 oxopentanoate.</text>
</comment>
<comment type="catalytic activity">
    <reaction evidence="1">
        <text>(2R,3S)-3-isopropylmalate + NAD(+) = 4-methyl-2-oxopentanoate + CO2 + NADH</text>
        <dbReference type="Rhea" id="RHEA:32271"/>
        <dbReference type="ChEBI" id="CHEBI:16526"/>
        <dbReference type="ChEBI" id="CHEBI:17865"/>
        <dbReference type="ChEBI" id="CHEBI:35121"/>
        <dbReference type="ChEBI" id="CHEBI:57540"/>
        <dbReference type="ChEBI" id="CHEBI:57945"/>
        <dbReference type="EC" id="1.1.1.85"/>
    </reaction>
</comment>
<comment type="cofactor">
    <cofactor evidence="1">
        <name>Mg(2+)</name>
        <dbReference type="ChEBI" id="CHEBI:18420"/>
    </cofactor>
    <cofactor evidence="1">
        <name>Mn(2+)</name>
        <dbReference type="ChEBI" id="CHEBI:29035"/>
    </cofactor>
    <text evidence="1">Binds 1 Mg(2+) or Mn(2+) ion per subunit.</text>
</comment>
<comment type="pathway">
    <text evidence="1">Amino-acid biosynthesis; L-leucine biosynthesis; L-leucine from 3-methyl-2-oxobutanoate: step 3/4.</text>
</comment>
<comment type="subunit">
    <text evidence="1">Homodimer.</text>
</comment>
<comment type="subcellular location">
    <subcellularLocation>
        <location evidence="1">Cytoplasm</location>
    </subcellularLocation>
</comment>
<comment type="similarity">
    <text evidence="1">Belongs to the isocitrate and isopropylmalate dehydrogenases family. LeuB type 1 subfamily.</text>
</comment>
<organism>
    <name type="scientific">Bacillus thuringiensis subsp. konkukian (strain 97-27)</name>
    <dbReference type="NCBI Taxonomy" id="281309"/>
    <lineage>
        <taxon>Bacteria</taxon>
        <taxon>Bacillati</taxon>
        <taxon>Bacillota</taxon>
        <taxon>Bacilli</taxon>
        <taxon>Bacillales</taxon>
        <taxon>Bacillaceae</taxon>
        <taxon>Bacillus</taxon>
        <taxon>Bacillus cereus group</taxon>
    </lineage>
</organism>
<accession>Q6HLF2</accession>
<feature type="chain" id="PRO_0000083643" description="3-isopropylmalate dehydrogenase">
    <location>
        <begin position="1"/>
        <end position="354"/>
    </location>
</feature>
<feature type="binding site" evidence="1">
    <location>
        <begin position="76"/>
        <end position="87"/>
    </location>
    <ligand>
        <name>NAD(+)</name>
        <dbReference type="ChEBI" id="CHEBI:57540"/>
    </ligand>
</feature>
<feature type="binding site" evidence="1">
    <location>
        <position position="94"/>
    </location>
    <ligand>
        <name>substrate</name>
    </ligand>
</feature>
<feature type="binding site" evidence="1">
    <location>
        <position position="104"/>
    </location>
    <ligand>
        <name>substrate</name>
    </ligand>
</feature>
<feature type="binding site" evidence="1">
    <location>
        <position position="130"/>
    </location>
    <ligand>
        <name>substrate</name>
    </ligand>
</feature>
<feature type="binding site" evidence="1">
    <location>
        <position position="215"/>
    </location>
    <ligand>
        <name>Mg(2+)</name>
        <dbReference type="ChEBI" id="CHEBI:18420"/>
    </ligand>
</feature>
<feature type="binding site" evidence="1">
    <location>
        <position position="215"/>
    </location>
    <ligand>
        <name>substrate</name>
    </ligand>
</feature>
<feature type="binding site" evidence="1">
    <location>
        <position position="239"/>
    </location>
    <ligand>
        <name>Mg(2+)</name>
        <dbReference type="ChEBI" id="CHEBI:18420"/>
    </ligand>
</feature>
<feature type="binding site" evidence="1">
    <location>
        <position position="243"/>
    </location>
    <ligand>
        <name>Mg(2+)</name>
        <dbReference type="ChEBI" id="CHEBI:18420"/>
    </ligand>
</feature>
<feature type="binding site" evidence="1">
    <location>
        <begin position="273"/>
        <end position="285"/>
    </location>
    <ligand>
        <name>NAD(+)</name>
        <dbReference type="ChEBI" id="CHEBI:57540"/>
    </ligand>
</feature>
<feature type="site" description="Important for catalysis" evidence="1">
    <location>
        <position position="137"/>
    </location>
</feature>
<feature type="site" description="Important for catalysis" evidence="1">
    <location>
        <position position="183"/>
    </location>
</feature>
<gene>
    <name evidence="1" type="primary">leuB</name>
    <name type="ordered locus">BT9727_1285</name>
</gene>
<evidence type="ECO:0000255" key="1">
    <source>
        <dbReference type="HAMAP-Rule" id="MF_01033"/>
    </source>
</evidence>
<protein>
    <recommendedName>
        <fullName evidence="1">3-isopropylmalate dehydrogenase</fullName>
        <ecNumber evidence="1">1.1.1.85</ecNumber>
    </recommendedName>
    <alternativeName>
        <fullName evidence="1">3-IPM-DH</fullName>
    </alternativeName>
    <alternativeName>
        <fullName evidence="1">Beta-IPM dehydrogenase</fullName>
        <shortName evidence="1">IMDH</shortName>
    </alternativeName>
</protein>
<name>LEU3_BACHK</name>
<reference key="1">
    <citation type="journal article" date="2006" name="J. Bacteriol.">
        <title>Pathogenomic sequence analysis of Bacillus cereus and Bacillus thuringiensis isolates closely related to Bacillus anthracis.</title>
        <authorList>
            <person name="Han C.S."/>
            <person name="Xie G."/>
            <person name="Challacombe J.F."/>
            <person name="Altherr M.R."/>
            <person name="Bhotika S.S."/>
            <person name="Bruce D."/>
            <person name="Campbell C.S."/>
            <person name="Campbell M.L."/>
            <person name="Chen J."/>
            <person name="Chertkov O."/>
            <person name="Cleland C."/>
            <person name="Dimitrijevic M."/>
            <person name="Doggett N.A."/>
            <person name="Fawcett J.J."/>
            <person name="Glavina T."/>
            <person name="Goodwin L.A."/>
            <person name="Hill K.K."/>
            <person name="Hitchcock P."/>
            <person name="Jackson P.J."/>
            <person name="Keim P."/>
            <person name="Kewalramani A.R."/>
            <person name="Longmire J."/>
            <person name="Lucas S."/>
            <person name="Malfatti S."/>
            <person name="McMurry K."/>
            <person name="Meincke L.J."/>
            <person name="Misra M."/>
            <person name="Moseman B.L."/>
            <person name="Mundt M."/>
            <person name="Munk A.C."/>
            <person name="Okinaka R.T."/>
            <person name="Parson-Quintana B."/>
            <person name="Reilly L.P."/>
            <person name="Richardson P."/>
            <person name="Robinson D.L."/>
            <person name="Rubin E."/>
            <person name="Saunders E."/>
            <person name="Tapia R."/>
            <person name="Tesmer J.G."/>
            <person name="Thayer N."/>
            <person name="Thompson L.S."/>
            <person name="Tice H."/>
            <person name="Ticknor L.O."/>
            <person name="Wills P.L."/>
            <person name="Brettin T.S."/>
            <person name="Gilna P."/>
        </authorList>
    </citation>
    <scope>NUCLEOTIDE SEQUENCE [LARGE SCALE GENOMIC DNA]</scope>
    <source>
        <strain>97-27</strain>
    </source>
</reference>
<proteinExistence type="inferred from homology"/>
<dbReference type="EC" id="1.1.1.85" evidence="1"/>
<dbReference type="EMBL" id="AE017355">
    <property type="protein sequence ID" value="AAT59415.1"/>
    <property type="molecule type" value="Genomic_DNA"/>
</dbReference>
<dbReference type="RefSeq" id="WP_000415392.1">
    <property type="nucleotide sequence ID" value="NC_005957.1"/>
</dbReference>
<dbReference type="RefSeq" id="YP_035619.1">
    <property type="nucleotide sequence ID" value="NC_005957.1"/>
</dbReference>
<dbReference type="SMR" id="Q6HLF2"/>
<dbReference type="KEGG" id="btk:BT9727_1285"/>
<dbReference type="PATRIC" id="fig|281309.8.peg.1354"/>
<dbReference type="HOGENOM" id="CLU_031953_0_3_9"/>
<dbReference type="UniPathway" id="UPA00048">
    <property type="reaction ID" value="UER00072"/>
</dbReference>
<dbReference type="Proteomes" id="UP000001301">
    <property type="component" value="Chromosome"/>
</dbReference>
<dbReference type="GO" id="GO:0005829">
    <property type="term" value="C:cytosol"/>
    <property type="evidence" value="ECO:0007669"/>
    <property type="project" value="TreeGrafter"/>
</dbReference>
<dbReference type="GO" id="GO:0003862">
    <property type="term" value="F:3-isopropylmalate dehydrogenase activity"/>
    <property type="evidence" value="ECO:0007669"/>
    <property type="project" value="UniProtKB-UniRule"/>
</dbReference>
<dbReference type="GO" id="GO:0000287">
    <property type="term" value="F:magnesium ion binding"/>
    <property type="evidence" value="ECO:0007669"/>
    <property type="project" value="InterPro"/>
</dbReference>
<dbReference type="GO" id="GO:0051287">
    <property type="term" value="F:NAD binding"/>
    <property type="evidence" value="ECO:0007669"/>
    <property type="project" value="InterPro"/>
</dbReference>
<dbReference type="GO" id="GO:0009098">
    <property type="term" value="P:L-leucine biosynthetic process"/>
    <property type="evidence" value="ECO:0007669"/>
    <property type="project" value="UniProtKB-UniRule"/>
</dbReference>
<dbReference type="FunFam" id="3.40.718.10:FF:000006">
    <property type="entry name" value="3-isopropylmalate dehydrogenase"/>
    <property type="match status" value="1"/>
</dbReference>
<dbReference type="Gene3D" id="3.40.718.10">
    <property type="entry name" value="Isopropylmalate Dehydrogenase"/>
    <property type="match status" value="1"/>
</dbReference>
<dbReference type="HAMAP" id="MF_01033">
    <property type="entry name" value="LeuB_type1"/>
    <property type="match status" value="1"/>
</dbReference>
<dbReference type="InterPro" id="IPR019818">
    <property type="entry name" value="IsoCit/isopropylmalate_DH_CS"/>
</dbReference>
<dbReference type="InterPro" id="IPR024084">
    <property type="entry name" value="IsoPropMal-DH-like_dom"/>
</dbReference>
<dbReference type="InterPro" id="IPR004429">
    <property type="entry name" value="Isopropylmalate_DH"/>
</dbReference>
<dbReference type="NCBIfam" id="TIGR00169">
    <property type="entry name" value="leuB"/>
    <property type="match status" value="1"/>
</dbReference>
<dbReference type="PANTHER" id="PTHR42979">
    <property type="entry name" value="3-ISOPROPYLMALATE DEHYDROGENASE"/>
    <property type="match status" value="1"/>
</dbReference>
<dbReference type="PANTHER" id="PTHR42979:SF1">
    <property type="entry name" value="3-ISOPROPYLMALATE DEHYDROGENASE"/>
    <property type="match status" value="1"/>
</dbReference>
<dbReference type="Pfam" id="PF00180">
    <property type="entry name" value="Iso_dh"/>
    <property type="match status" value="1"/>
</dbReference>
<dbReference type="SMART" id="SM01329">
    <property type="entry name" value="Iso_dh"/>
    <property type="match status" value="1"/>
</dbReference>
<dbReference type="SUPFAM" id="SSF53659">
    <property type="entry name" value="Isocitrate/Isopropylmalate dehydrogenase-like"/>
    <property type="match status" value="1"/>
</dbReference>
<dbReference type="PROSITE" id="PS00470">
    <property type="entry name" value="IDH_IMDH"/>
    <property type="match status" value="1"/>
</dbReference>
<keyword id="KW-0028">Amino-acid biosynthesis</keyword>
<keyword id="KW-0100">Branched-chain amino acid biosynthesis</keyword>
<keyword id="KW-0963">Cytoplasm</keyword>
<keyword id="KW-0432">Leucine biosynthesis</keyword>
<keyword id="KW-0460">Magnesium</keyword>
<keyword id="KW-0464">Manganese</keyword>
<keyword id="KW-0479">Metal-binding</keyword>
<keyword id="KW-0520">NAD</keyword>
<keyword id="KW-0560">Oxidoreductase</keyword>
<sequence length="354" mass="38274">MEKRIVCLAGDGVGPEVMESAKGVLHMVERLYGHHFHLQDEHFGGVAIDLTGQPLPQRTLAACLASDAVLLGAVGGPRWDGAKERPEKGLLALRKGLGVFANVRPVTVESATAHLSPLKKADEIDFVVVRELTGGIYFSYPKKRTDEVATDTLTYHRHEIERIVSYAFQLASKRKKKVTSIDKANVLESSKLWRTVTEEVALRYPDVELEHILVDAAAMELIRNPGRFDVIVTENLFGDILSDEASVLAGSLGMLPSASHAEKGPSLYEPIHGSAPDIAGKNKANPIAMMRSVAMMLGQSFGLTREGCAIEEAISAVLKSGKCTADIGGAETTTSFTKAVMQEMEEQALVGRGR</sequence>